<comment type="function">
    <text evidence="1">Functions in the N-end rule pathway of protein degradation where it conjugates Leu, Phe and, less efficiently, Met from aminoacyl-tRNAs to the N-termini of proteins containing an N-terminal arginine or lysine.</text>
</comment>
<comment type="catalytic activity">
    <reaction evidence="1">
        <text>N-terminal L-lysyl-[protein] + L-leucyl-tRNA(Leu) = N-terminal L-leucyl-L-lysyl-[protein] + tRNA(Leu) + H(+)</text>
        <dbReference type="Rhea" id="RHEA:12340"/>
        <dbReference type="Rhea" id="RHEA-COMP:9613"/>
        <dbReference type="Rhea" id="RHEA-COMP:9622"/>
        <dbReference type="Rhea" id="RHEA-COMP:12670"/>
        <dbReference type="Rhea" id="RHEA-COMP:12671"/>
        <dbReference type="ChEBI" id="CHEBI:15378"/>
        <dbReference type="ChEBI" id="CHEBI:65249"/>
        <dbReference type="ChEBI" id="CHEBI:78442"/>
        <dbReference type="ChEBI" id="CHEBI:78494"/>
        <dbReference type="ChEBI" id="CHEBI:133043"/>
        <dbReference type="EC" id="2.3.2.6"/>
    </reaction>
</comment>
<comment type="catalytic activity">
    <reaction evidence="1">
        <text>N-terminal L-arginyl-[protein] + L-leucyl-tRNA(Leu) = N-terminal L-leucyl-L-arginyl-[protein] + tRNA(Leu) + H(+)</text>
        <dbReference type="Rhea" id="RHEA:50416"/>
        <dbReference type="Rhea" id="RHEA-COMP:9613"/>
        <dbReference type="Rhea" id="RHEA-COMP:9622"/>
        <dbReference type="Rhea" id="RHEA-COMP:12672"/>
        <dbReference type="Rhea" id="RHEA-COMP:12673"/>
        <dbReference type="ChEBI" id="CHEBI:15378"/>
        <dbReference type="ChEBI" id="CHEBI:64719"/>
        <dbReference type="ChEBI" id="CHEBI:78442"/>
        <dbReference type="ChEBI" id="CHEBI:78494"/>
        <dbReference type="ChEBI" id="CHEBI:133044"/>
        <dbReference type="EC" id="2.3.2.6"/>
    </reaction>
</comment>
<comment type="catalytic activity">
    <reaction evidence="1">
        <text>L-phenylalanyl-tRNA(Phe) + an N-terminal L-alpha-aminoacyl-[protein] = an N-terminal L-phenylalanyl-L-alpha-aminoacyl-[protein] + tRNA(Phe)</text>
        <dbReference type="Rhea" id="RHEA:43632"/>
        <dbReference type="Rhea" id="RHEA-COMP:9668"/>
        <dbReference type="Rhea" id="RHEA-COMP:9699"/>
        <dbReference type="Rhea" id="RHEA-COMP:10636"/>
        <dbReference type="Rhea" id="RHEA-COMP:10637"/>
        <dbReference type="ChEBI" id="CHEBI:78442"/>
        <dbReference type="ChEBI" id="CHEBI:78531"/>
        <dbReference type="ChEBI" id="CHEBI:78597"/>
        <dbReference type="ChEBI" id="CHEBI:83561"/>
        <dbReference type="EC" id="2.3.2.6"/>
    </reaction>
</comment>
<comment type="subcellular location">
    <subcellularLocation>
        <location evidence="1">Cytoplasm</location>
    </subcellularLocation>
</comment>
<comment type="similarity">
    <text evidence="1">Belongs to the L/F-transferase family.</text>
</comment>
<accession>B1IWN8</accession>
<reference key="1">
    <citation type="submission" date="2008-02" db="EMBL/GenBank/DDBJ databases">
        <title>Complete sequence of Escherichia coli C str. ATCC 8739.</title>
        <authorList>
            <person name="Copeland A."/>
            <person name="Lucas S."/>
            <person name="Lapidus A."/>
            <person name="Glavina del Rio T."/>
            <person name="Dalin E."/>
            <person name="Tice H."/>
            <person name="Bruce D."/>
            <person name="Goodwin L."/>
            <person name="Pitluck S."/>
            <person name="Kiss H."/>
            <person name="Brettin T."/>
            <person name="Detter J.C."/>
            <person name="Han C."/>
            <person name="Kuske C.R."/>
            <person name="Schmutz J."/>
            <person name="Larimer F."/>
            <person name="Land M."/>
            <person name="Hauser L."/>
            <person name="Kyrpides N."/>
            <person name="Mikhailova N."/>
            <person name="Ingram L."/>
            <person name="Richardson P."/>
        </authorList>
    </citation>
    <scope>NUCLEOTIDE SEQUENCE [LARGE SCALE GENOMIC DNA]</scope>
    <source>
        <strain>ATCC 8739 / DSM 1576 / NBRC 3972 / NCIMB 8545 / WDCM 00012 / Crooks</strain>
    </source>
</reference>
<gene>
    <name evidence="1" type="primary">aat</name>
    <name type="ordered locus">EcolC_2711</name>
</gene>
<dbReference type="EC" id="2.3.2.6" evidence="1"/>
<dbReference type="EMBL" id="CP000946">
    <property type="protein sequence ID" value="ACA78340.1"/>
    <property type="molecule type" value="Genomic_DNA"/>
</dbReference>
<dbReference type="RefSeq" id="WP_001241678.1">
    <property type="nucleotide sequence ID" value="NZ_MTFT01000009.1"/>
</dbReference>
<dbReference type="SMR" id="B1IWN8"/>
<dbReference type="GeneID" id="75206174"/>
<dbReference type="KEGG" id="ecl:EcolC_2711"/>
<dbReference type="HOGENOM" id="CLU_075045_0_0_6"/>
<dbReference type="GO" id="GO:0005737">
    <property type="term" value="C:cytoplasm"/>
    <property type="evidence" value="ECO:0007669"/>
    <property type="project" value="UniProtKB-SubCell"/>
</dbReference>
<dbReference type="GO" id="GO:0008914">
    <property type="term" value="F:leucyl-tRNA--protein transferase activity"/>
    <property type="evidence" value="ECO:0007669"/>
    <property type="project" value="UniProtKB-UniRule"/>
</dbReference>
<dbReference type="GO" id="GO:0030163">
    <property type="term" value="P:protein catabolic process"/>
    <property type="evidence" value="ECO:0007669"/>
    <property type="project" value="UniProtKB-UniRule"/>
</dbReference>
<dbReference type="FunFam" id="3.30.70.3550:FF:000001">
    <property type="entry name" value="Leucyl/phenylalanyl-tRNA--protein transferase"/>
    <property type="match status" value="1"/>
</dbReference>
<dbReference type="FunFam" id="3.40.630.70:FF:000001">
    <property type="entry name" value="Leucyl/phenylalanyl-tRNA--protein transferase"/>
    <property type="match status" value="1"/>
</dbReference>
<dbReference type="Gene3D" id="3.40.630.70">
    <property type="entry name" value="Leucyl/phenylalanyl-tRNA-protein transferase, C-terminal domain"/>
    <property type="match status" value="1"/>
</dbReference>
<dbReference type="Gene3D" id="3.30.70.3550">
    <property type="entry name" value="Leucyl/phenylalanyl-tRNA-protein transferase, N-terminal domain"/>
    <property type="match status" value="1"/>
</dbReference>
<dbReference type="HAMAP" id="MF_00688">
    <property type="entry name" value="Leu_Phe_trans"/>
    <property type="match status" value="1"/>
</dbReference>
<dbReference type="InterPro" id="IPR016181">
    <property type="entry name" value="Acyl_CoA_acyltransferase"/>
</dbReference>
<dbReference type="InterPro" id="IPR004616">
    <property type="entry name" value="Leu/Phe-tRNA_Trfase"/>
</dbReference>
<dbReference type="InterPro" id="IPR042203">
    <property type="entry name" value="Leu/Phe-tRNA_Trfase_C"/>
</dbReference>
<dbReference type="InterPro" id="IPR042221">
    <property type="entry name" value="Leu/Phe-tRNA_Trfase_N"/>
</dbReference>
<dbReference type="NCBIfam" id="TIGR00667">
    <property type="entry name" value="aat"/>
    <property type="match status" value="1"/>
</dbReference>
<dbReference type="PANTHER" id="PTHR30098">
    <property type="entry name" value="LEUCYL/PHENYLALANYL-TRNA--PROTEIN TRANSFERASE"/>
    <property type="match status" value="1"/>
</dbReference>
<dbReference type="PANTHER" id="PTHR30098:SF2">
    <property type="entry name" value="LEUCYL_PHENYLALANYL-TRNA--PROTEIN TRANSFERASE"/>
    <property type="match status" value="1"/>
</dbReference>
<dbReference type="Pfam" id="PF03588">
    <property type="entry name" value="Leu_Phe_trans"/>
    <property type="match status" value="1"/>
</dbReference>
<dbReference type="SUPFAM" id="SSF55729">
    <property type="entry name" value="Acyl-CoA N-acyltransferases (Nat)"/>
    <property type="match status" value="1"/>
</dbReference>
<name>LFTR_ECOLC</name>
<feature type="chain" id="PRO_1000083095" description="Leucyl/phenylalanyl-tRNA--protein transferase">
    <location>
        <begin position="1"/>
        <end position="234"/>
    </location>
</feature>
<keyword id="KW-0012">Acyltransferase</keyword>
<keyword id="KW-0963">Cytoplasm</keyword>
<keyword id="KW-0808">Transferase</keyword>
<sequence>MRLVQLSRHSIAFPSPEGALREPNGLLALGGDLSPARLLMAYQRGIFPWFSPGDPILWWSPDPRAVLWPESLHISRSMKRFHKRSPYRVTMNYAFGQVIEGCASDREEGTWITRGVVEAYHRLHELGHAHSIEVWREDELVGGMYGVAQGTLFCGESMFSRMENASKTALLVFCEEFIGHGGKLIDCQVLNDHTASLGACEIPRRDYLNYLNQMRLGRLPNNFWVPRCLFSPQE</sequence>
<protein>
    <recommendedName>
        <fullName evidence="1">Leucyl/phenylalanyl-tRNA--protein transferase</fullName>
        <ecNumber evidence="1">2.3.2.6</ecNumber>
    </recommendedName>
    <alternativeName>
        <fullName evidence="1">L/F-transferase</fullName>
    </alternativeName>
    <alternativeName>
        <fullName evidence="1">Leucyltransferase</fullName>
    </alternativeName>
    <alternativeName>
        <fullName evidence="1">Phenyalanyltransferase</fullName>
    </alternativeName>
</protein>
<proteinExistence type="inferred from homology"/>
<evidence type="ECO:0000255" key="1">
    <source>
        <dbReference type="HAMAP-Rule" id="MF_00688"/>
    </source>
</evidence>
<organism>
    <name type="scientific">Escherichia coli (strain ATCC 8739 / DSM 1576 / NBRC 3972 / NCIMB 8545 / WDCM 00012 / Crooks)</name>
    <dbReference type="NCBI Taxonomy" id="481805"/>
    <lineage>
        <taxon>Bacteria</taxon>
        <taxon>Pseudomonadati</taxon>
        <taxon>Pseudomonadota</taxon>
        <taxon>Gammaproteobacteria</taxon>
        <taxon>Enterobacterales</taxon>
        <taxon>Enterobacteriaceae</taxon>
        <taxon>Escherichia</taxon>
    </lineage>
</organism>